<reference key="1">
    <citation type="submission" date="2007-05" db="EMBL/GenBank/DDBJ databases">
        <title>Complete sequence of Geobacter uraniireducens Rf4.</title>
        <authorList>
            <consortium name="US DOE Joint Genome Institute"/>
            <person name="Copeland A."/>
            <person name="Lucas S."/>
            <person name="Lapidus A."/>
            <person name="Barry K."/>
            <person name="Detter J.C."/>
            <person name="Glavina del Rio T."/>
            <person name="Hammon N."/>
            <person name="Israni S."/>
            <person name="Dalin E."/>
            <person name="Tice H."/>
            <person name="Pitluck S."/>
            <person name="Chertkov O."/>
            <person name="Brettin T."/>
            <person name="Bruce D."/>
            <person name="Han C."/>
            <person name="Schmutz J."/>
            <person name="Larimer F."/>
            <person name="Land M."/>
            <person name="Hauser L."/>
            <person name="Kyrpides N."/>
            <person name="Mikhailova N."/>
            <person name="Shelobolina E."/>
            <person name="Aklujkar M."/>
            <person name="Lovley D."/>
            <person name="Richardson P."/>
        </authorList>
    </citation>
    <scope>NUCLEOTIDE SEQUENCE [LARGE SCALE GENOMIC DNA]</scope>
    <source>
        <strain>ATCC BAA-1134 / JCM 13001 / Rf4</strain>
    </source>
</reference>
<name>KDSA_GEOUR</name>
<comment type="catalytic activity">
    <reaction evidence="1">
        <text>D-arabinose 5-phosphate + phosphoenolpyruvate + H2O = 3-deoxy-alpha-D-manno-2-octulosonate-8-phosphate + phosphate</text>
        <dbReference type="Rhea" id="RHEA:14053"/>
        <dbReference type="ChEBI" id="CHEBI:15377"/>
        <dbReference type="ChEBI" id="CHEBI:43474"/>
        <dbReference type="ChEBI" id="CHEBI:57693"/>
        <dbReference type="ChEBI" id="CHEBI:58702"/>
        <dbReference type="ChEBI" id="CHEBI:85985"/>
        <dbReference type="EC" id="2.5.1.55"/>
    </reaction>
</comment>
<comment type="pathway">
    <text evidence="1">Carbohydrate biosynthesis; 3-deoxy-D-manno-octulosonate biosynthesis; 3-deoxy-D-manno-octulosonate from D-ribulose 5-phosphate: step 2/3.</text>
</comment>
<comment type="pathway">
    <text evidence="1">Bacterial outer membrane biogenesis; lipopolysaccharide biosynthesis.</text>
</comment>
<comment type="subcellular location">
    <subcellularLocation>
        <location evidence="1">Cytoplasm</location>
    </subcellularLocation>
</comment>
<comment type="similarity">
    <text evidence="1">Belongs to the KdsA family.</text>
</comment>
<sequence>MVKEISVGNVKIGGDRPLVLIAGPCVIENEVATMRCAERLMTICNGVSIPLIFKASYDKANRTSVNSFRGPGMKDGLKILKKVKEALGVPVLSDIHSIEQVEPAAEVLDVVQIPAFLCRQTDLVVAAARSGKVVNIKKGQFLAPWDMENVAGKAVSTGNDNIILTERGVSFGYNNLVSDMRSFPILRKIGYPVVFDATHSVQLPGGLGGSSGGQREFVEYLGRAAVATGIDGIFMEVHDDPEKALCDGPNSVKLEDLPALLKKLKAIDAIVK</sequence>
<evidence type="ECO:0000255" key="1">
    <source>
        <dbReference type="HAMAP-Rule" id="MF_00056"/>
    </source>
</evidence>
<proteinExistence type="inferred from homology"/>
<organism>
    <name type="scientific">Geotalea uraniireducens (strain Rf4)</name>
    <name type="common">Geobacter uraniireducens</name>
    <dbReference type="NCBI Taxonomy" id="351605"/>
    <lineage>
        <taxon>Bacteria</taxon>
        <taxon>Pseudomonadati</taxon>
        <taxon>Thermodesulfobacteriota</taxon>
        <taxon>Desulfuromonadia</taxon>
        <taxon>Geobacterales</taxon>
        <taxon>Geobacteraceae</taxon>
        <taxon>Geotalea</taxon>
    </lineage>
</organism>
<gene>
    <name evidence="1" type="primary">kdsA</name>
    <name type="ordered locus">Gura_2978</name>
</gene>
<protein>
    <recommendedName>
        <fullName evidence="1">2-dehydro-3-deoxyphosphooctonate aldolase</fullName>
        <ecNumber evidence="1">2.5.1.55</ecNumber>
    </recommendedName>
    <alternativeName>
        <fullName evidence="1">3-deoxy-D-manno-octulosonic acid 8-phosphate synthase</fullName>
    </alternativeName>
    <alternativeName>
        <fullName evidence="1">KDO-8-phosphate synthase</fullName>
        <shortName evidence="1">KDO 8-P synthase</shortName>
        <shortName evidence="1">KDOPS</shortName>
    </alternativeName>
    <alternativeName>
        <fullName evidence="1">Phospho-2-dehydro-3-deoxyoctonate aldolase</fullName>
    </alternativeName>
</protein>
<accession>A5G5T2</accession>
<feature type="chain" id="PRO_1000074983" description="2-dehydro-3-deoxyphosphooctonate aldolase">
    <location>
        <begin position="1"/>
        <end position="272"/>
    </location>
</feature>
<keyword id="KW-0963">Cytoplasm</keyword>
<keyword id="KW-0448">Lipopolysaccharide biosynthesis</keyword>
<keyword id="KW-1185">Reference proteome</keyword>
<keyword id="KW-0808">Transferase</keyword>
<dbReference type="EC" id="2.5.1.55" evidence="1"/>
<dbReference type="EMBL" id="CP000698">
    <property type="protein sequence ID" value="ABQ27150.1"/>
    <property type="molecule type" value="Genomic_DNA"/>
</dbReference>
<dbReference type="RefSeq" id="WP_011939819.1">
    <property type="nucleotide sequence ID" value="NC_009483.1"/>
</dbReference>
<dbReference type="SMR" id="A5G5T2"/>
<dbReference type="STRING" id="351605.Gura_2978"/>
<dbReference type="KEGG" id="gur:Gura_2978"/>
<dbReference type="HOGENOM" id="CLU_036666_0_0_7"/>
<dbReference type="OrthoDB" id="9802281at2"/>
<dbReference type="UniPathway" id="UPA00030"/>
<dbReference type="UniPathway" id="UPA00357">
    <property type="reaction ID" value="UER00474"/>
</dbReference>
<dbReference type="Proteomes" id="UP000006695">
    <property type="component" value="Chromosome"/>
</dbReference>
<dbReference type="GO" id="GO:0005737">
    <property type="term" value="C:cytoplasm"/>
    <property type="evidence" value="ECO:0007669"/>
    <property type="project" value="UniProtKB-SubCell"/>
</dbReference>
<dbReference type="GO" id="GO:0008676">
    <property type="term" value="F:3-deoxy-8-phosphooctulonate synthase activity"/>
    <property type="evidence" value="ECO:0007669"/>
    <property type="project" value="UniProtKB-UniRule"/>
</dbReference>
<dbReference type="GO" id="GO:0019294">
    <property type="term" value="P:keto-3-deoxy-D-manno-octulosonic acid biosynthetic process"/>
    <property type="evidence" value="ECO:0007669"/>
    <property type="project" value="UniProtKB-UniRule"/>
</dbReference>
<dbReference type="Gene3D" id="3.20.20.70">
    <property type="entry name" value="Aldolase class I"/>
    <property type="match status" value="1"/>
</dbReference>
<dbReference type="HAMAP" id="MF_00056">
    <property type="entry name" value="KDO8P_synth"/>
    <property type="match status" value="1"/>
</dbReference>
<dbReference type="InterPro" id="IPR013785">
    <property type="entry name" value="Aldolase_TIM"/>
</dbReference>
<dbReference type="InterPro" id="IPR006218">
    <property type="entry name" value="DAHP1/KDSA"/>
</dbReference>
<dbReference type="InterPro" id="IPR006269">
    <property type="entry name" value="KDO8P_synthase"/>
</dbReference>
<dbReference type="NCBIfam" id="TIGR01362">
    <property type="entry name" value="KDO8P_synth"/>
    <property type="match status" value="1"/>
</dbReference>
<dbReference type="NCBIfam" id="NF003543">
    <property type="entry name" value="PRK05198.1"/>
    <property type="match status" value="1"/>
</dbReference>
<dbReference type="PANTHER" id="PTHR21057">
    <property type="entry name" value="PHOSPHO-2-DEHYDRO-3-DEOXYHEPTONATE ALDOLASE"/>
    <property type="match status" value="1"/>
</dbReference>
<dbReference type="Pfam" id="PF00793">
    <property type="entry name" value="DAHP_synth_1"/>
    <property type="match status" value="1"/>
</dbReference>
<dbReference type="SUPFAM" id="SSF51569">
    <property type="entry name" value="Aldolase"/>
    <property type="match status" value="1"/>
</dbReference>